<proteinExistence type="inferred from homology"/>
<protein>
    <recommendedName>
        <fullName evidence="1">Outer membrane protein assembly factor BamD</fullName>
    </recommendedName>
</protein>
<keyword id="KW-0998">Cell outer membrane</keyword>
<keyword id="KW-0449">Lipoprotein</keyword>
<keyword id="KW-0472">Membrane</keyword>
<keyword id="KW-0564">Palmitate</keyword>
<keyword id="KW-1185">Reference proteome</keyword>
<keyword id="KW-0677">Repeat</keyword>
<keyword id="KW-0732">Signal</keyword>
<keyword id="KW-0802">TPR repeat</keyword>
<sequence length="251" mass="28959">MKLTKLLSALLVIGLVLGGCKSKKDSNDIVAPIATLYNEGIILLDKKKYKKAAEEFGKIFYQHPGNEMTPQAELMQAYSLFLAAQYEEAVDILNMFINLHPANIDIAYAYYLKALSYYMLISDVNHDQSRTFLSKDSFEDVITKFPNTKYAIDSSLKIDLVNDHLAGKEMMIGRFYLKKKNPMAAINRFEEVIDNYQTTYHSVEALYRLVESYMMLGLHDEAKKYTSVLGYNYPNSKWYSYAYRLVKNYQN</sequence>
<evidence type="ECO:0000255" key="1">
    <source>
        <dbReference type="HAMAP-Rule" id="MF_00922"/>
    </source>
</evidence>
<feature type="signal peptide" evidence="1">
    <location>
        <begin position="1"/>
        <end position="19"/>
    </location>
</feature>
<feature type="chain" id="PRO_0000036232" description="Outer membrane protein assembly factor BamD">
    <location>
        <begin position="20"/>
        <end position="251"/>
    </location>
</feature>
<feature type="repeat" description="TPR 1">
    <location>
        <begin position="33"/>
        <end position="66"/>
    </location>
</feature>
<feature type="repeat" description="TPR 2">
    <location>
        <begin position="70"/>
        <end position="103"/>
    </location>
</feature>
<feature type="repeat" description="TPR 3">
    <location>
        <begin position="166"/>
        <end position="199"/>
    </location>
</feature>
<feature type="lipid moiety-binding region" description="N-palmitoyl cysteine" evidence="1">
    <location>
        <position position="20"/>
    </location>
</feature>
<feature type="lipid moiety-binding region" description="S-diacylglycerol cysteine" evidence="1">
    <location>
        <position position="20"/>
    </location>
</feature>
<organism>
    <name type="scientific">Rickettsia prowazekii (strain Madrid E)</name>
    <dbReference type="NCBI Taxonomy" id="272947"/>
    <lineage>
        <taxon>Bacteria</taxon>
        <taxon>Pseudomonadati</taxon>
        <taxon>Pseudomonadota</taxon>
        <taxon>Alphaproteobacteria</taxon>
        <taxon>Rickettsiales</taxon>
        <taxon>Rickettsiaceae</taxon>
        <taxon>Rickettsieae</taxon>
        <taxon>Rickettsia</taxon>
        <taxon>typhus group</taxon>
    </lineage>
</organism>
<gene>
    <name evidence="1" type="primary">bamD</name>
    <name type="ordered locus">RP183</name>
</gene>
<accession>Q9ZDY1</accession>
<comment type="function">
    <text evidence="1">Part of the outer membrane protein assembly complex, which is involved in assembly and insertion of beta-barrel proteins into the outer membrane.</text>
</comment>
<comment type="subunit">
    <text evidence="1">Part of the Bam complex.</text>
</comment>
<comment type="subcellular location">
    <subcellularLocation>
        <location evidence="1">Cell outer membrane</location>
        <topology evidence="1">Lipid-anchor</topology>
    </subcellularLocation>
</comment>
<comment type="similarity">
    <text evidence="1">Belongs to the BamD family.</text>
</comment>
<reference key="1">
    <citation type="journal article" date="1998" name="Nature">
        <title>The genome sequence of Rickettsia prowazekii and the origin of mitochondria.</title>
        <authorList>
            <person name="Andersson S.G.E."/>
            <person name="Zomorodipour A."/>
            <person name="Andersson J.O."/>
            <person name="Sicheritz-Ponten T."/>
            <person name="Alsmark U.C.M."/>
            <person name="Podowski R.M."/>
            <person name="Naeslund A.K."/>
            <person name="Eriksson A.-S."/>
            <person name="Winkler H.H."/>
            <person name="Kurland C.G."/>
        </authorList>
    </citation>
    <scope>NUCLEOTIDE SEQUENCE [LARGE SCALE GENOMIC DNA]</scope>
    <source>
        <strain>Madrid E</strain>
    </source>
</reference>
<dbReference type="EMBL" id="AJ235270">
    <property type="protein sequence ID" value="CAA14649.1"/>
    <property type="molecule type" value="Genomic_DNA"/>
</dbReference>
<dbReference type="PIR" id="B71729">
    <property type="entry name" value="B71729"/>
</dbReference>
<dbReference type="RefSeq" id="NP_220572.1">
    <property type="nucleotide sequence ID" value="NC_000963.1"/>
</dbReference>
<dbReference type="RefSeq" id="WP_004598609.1">
    <property type="nucleotide sequence ID" value="NC_000963.1"/>
</dbReference>
<dbReference type="SMR" id="Q9ZDY1"/>
<dbReference type="STRING" id="272947.gene:17555265"/>
<dbReference type="EnsemblBacteria" id="CAA14649">
    <property type="protein sequence ID" value="CAA14649"/>
    <property type="gene ID" value="CAA14649"/>
</dbReference>
<dbReference type="KEGG" id="rpr:RP183"/>
<dbReference type="PATRIC" id="fig|272947.5.peg.190"/>
<dbReference type="eggNOG" id="COG4105">
    <property type="taxonomic scope" value="Bacteria"/>
</dbReference>
<dbReference type="HOGENOM" id="CLU_065982_1_1_5"/>
<dbReference type="OrthoDB" id="9804044at2"/>
<dbReference type="Proteomes" id="UP000002480">
    <property type="component" value="Chromosome"/>
</dbReference>
<dbReference type="GO" id="GO:1990063">
    <property type="term" value="C:Bam protein complex"/>
    <property type="evidence" value="ECO:0007669"/>
    <property type="project" value="TreeGrafter"/>
</dbReference>
<dbReference type="GO" id="GO:0043165">
    <property type="term" value="P:Gram-negative-bacterium-type cell outer membrane assembly"/>
    <property type="evidence" value="ECO:0007669"/>
    <property type="project" value="UniProtKB-UniRule"/>
</dbReference>
<dbReference type="GO" id="GO:0051205">
    <property type="term" value="P:protein insertion into membrane"/>
    <property type="evidence" value="ECO:0007669"/>
    <property type="project" value="UniProtKB-UniRule"/>
</dbReference>
<dbReference type="CDD" id="cd15830">
    <property type="entry name" value="BamD"/>
    <property type="match status" value="1"/>
</dbReference>
<dbReference type="Gene3D" id="1.25.40.10">
    <property type="entry name" value="Tetratricopeptide repeat domain"/>
    <property type="match status" value="1"/>
</dbReference>
<dbReference type="HAMAP" id="MF_00922">
    <property type="entry name" value="OM_assembly_BamD"/>
    <property type="match status" value="1"/>
</dbReference>
<dbReference type="InterPro" id="IPR017689">
    <property type="entry name" value="BamD"/>
</dbReference>
<dbReference type="InterPro" id="IPR039565">
    <property type="entry name" value="BamD-like"/>
</dbReference>
<dbReference type="InterPro" id="IPR011990">
    <property type="entry name" value="TPR-like_helical_dom_sf"/>
</dbReference>
<dbReference type="NCBIfam" id="TIGR03302">
    <property type="entry name" value="OM_YfiO"/>
    <property type="match status" value="1"/>
</dbReference>
<dbReference type="PANTHER" id="PTHR37423:SF1">
    <property type="entry name" value="OUTER MEMBRANE PROTEIN ASSEMBLY FACTOR BAMD"/>
    <property type="match status" value="1"/>
</dbReference>
<dbReference type="PANTHER" id="PTHR37423">
    <property type="entry name" value="SOLUBLE LYTIC MUREIN TRANSGLYCOSYLASE-RELATED"/>
    <property type="match status" value="1"/>
</dbReference>
<dbReference type="Pfam" id="PF13525">
    <property type="entry name" value="YfiO"/>
    <property type="match status" value="1"/>
</dbReference>
<dbReference type="SUPFAM" id="SSF48452">
    <property type="entry name" value="TPR-like"/>
    <property type="match status" value="1"/>
</dbReference>
<dbReference type="PROSITE" id="PS51257">
    <property type="entry name" value="PROKAR_LIPOPROTEIN"/>
    <property type="match status" value="1"/>
</dbReference>
<dbReference type="PROSITE" id="PS50293">
    <property type="entry name" value="TPR_REGION"/>
    <property type="match status" value="1"/>
</dbReference>
<name>BAMD_RICPR</name>